<evidence type="ECO:0000255" key="1"/>
<evidence type="ECO:0000256" key="2">
    <source>
        <dbReference type="SAM" id="MobiDB-lite"/>
    </source>
</evidence>
<evidence type="ECO:0000305" key="3"/>
<evidence type="ECO:0000305" key="4">
    <source>
    </source>
</evidence>
<proteinExistence type="uncertain"/>
<comment type="subcellular location">
    <subcellularLocation>
        <location evidence="3">Membrane</location>
        <topology evidence="3">Single-pass membrane protein</topology>
    </subcellularLocation>
</comment>
<comment type="caution">
    <text evidence="4">Product of a dubious gene prediction unlikely to encode a functional protein. Because of that it is not part of the S.cerevisiae S288c complete/reference proteome set.</text>
</comment>
<accession>Q08958</accession>
<protein>
    <recommendedName>
        <fullName>Putative uncharacterized protein YPL205C</fullName>
    </recommendedName>
</protein>
<sequence length="114" mass="13826">MYPFYKYIFSFWFFFLVEYVVTFRLFLSLKSGNIFLSTQQRFKDATKMCFHHQMLSSSVEPFFSLYFNHVPYMWSCFNFFSSSPFPRCTKNSPEKKKFKRGLPISSKYTDGKKR</sequence>
<gene>
    <name type="ordered locus">YPL205C</name>
    <name type="ORF">P1845</name>
</gene>
<dbReference type="EMBL" id="Z73561">
    <property type="protein sequence ID" value="CAA97919.1"/>
    <property type="molecule type" value="Genomic_DNA"/>
</dbReference>
<dbReference type="EMBL" id="AY693359">
    <property type="protein sequence ID" value="AAT93378.1"/>
    <property type="molecule type" value="Genomic_DNA"/>
</dbReference>
<dbReference type="PIR" id="S65224">
    <property type="entry name" value="S65224"/>
</dbReference>
<dbReference type="SMR" id="Q08958"/>
<dbReference type="DIP" id="DIP-5334N"/>
<dbReference type="IntAct" id="Q08958">
    <property type="interactions" value="1"/>
</dbReference>
<dbReference type="PaxDb" id="4932-YPL205C"/>
<dbReference type="EnsemblFungi" id="YPL205C_mRNA">
    <property type="protein sequence ID" value="YPL205C"/>
    <property type="gene ID" value="YPL205C"/>
</dbReference>
<dbReference type="AGR" id="SGD:S000006126"/>
<dbReference type="SGD" id="S000006126">
    <property type="gene designation" value="YPL205C"/>
</dbReference>
<dbReference type="HOGENOM" id="CLU_2122983_0_0_1"/>
<dbReference type="GO" id="GO:0016020">
    <property type="term" value="C:membrane"/>
    <property type="evidence" value="ECO:0007669"/>
    <property type="project" value="UniProtKB-SubCell"/>
</dbReference>
<dbReference type="GO" id="GO:0030437">
    <property type="term" value="P:ascospore formation"/>
    <property type="evidence" value="ECO:0007001"/>
    <property type="project" value="SGD"/>
</dbReference>
<reference key="1">
    <citation type="journal article" date="1997" name="Nature">
        <title>The nucleotide sequence of Saccharomyces cerevisiae chromosome XVI.</title>
        <authorList>
            <person name="Bussey H."/>
            <person name="Storms R.K."/>
            <person name="Ahmed A."/>
            <person name="Albermann K."/>
            <person name="Allen E."/>
            <person name="Ansorge W."/>
            <person name="Araujo R."/>
            <person name="Aparicio A."/>
            <person name="Barrell B.G."/>
            <person name="Badcock K."/>
            <person name="Benes V."/>
            <person name="Botstein D."/>
            <person name="Bowman S."/>
            <person name="Brueckner M."/>
            <person name="Carpenter J."/>
            <person name="Cherry J.M."/>
            <person name="Chung E."/>
            <person name="Churcher C.M."/>
            <person name="Coster F."/>
            <person name="Davis K."/>
            <person name="Davis R.W."/>
            <person name="Dietrich F.S."/>
            <person name="Delius H."/>
            <person name="DiPaolo T."/>
            <person name="Dubois E."/>
            <person name="Duesterhoeft A."/>
            <person name="Duncan M."/>
            <person name="Floeth M."/>
            <person name="Fortin N."/>
            <person name="Friesen J.D."/>
            <person name="Fritz C."/>
            <person name="Goffeau A."/>
            <person name="Hall J."/>
            <person name="Hebling U."/>
            <person name="Heumann K."/>
            <person name="Hilbert H."/>
            <person name="Hillier L.W."/>
            <person name="Hunicke-Smith S."/>
            <person name="Hyman R.W."/>
            <person name="Johnston M."/>
            <person name="Kalman S."/>
            <person name="Kleine K."/>
            <person name="Komp C."/>
            <person name="Kurdi O."/>
            <person name="Lashkari D."/>
            <person name="Lew H."/>
            <person name="Lin A."/>
            <person name="Lin D."/>
            <person name="Louis E.J."/>
            <person name="Marathe R."/>
            <person name="Messenguy F."/>
            <person name="Mewes H.-W."/>
            <person name="Mirtipati S."/>
            <person name="Moestl D."/>
            <person name="Mueller-Auer S."/>
            <person name="Namath A."/>
            <person name="Nentwich U."/>
            <person name="Oefner P."/>
            <person name="Pearson D."/>
            <person name="Petel F.X."/>
            <person name="Pohl T.M."/>
            <person name="Purnelle B."/>
            <person name="Rajandream M.A."/>
            <person name="Rechmann S."/>
            <person name="Rieger M."/>
            <person name="Riles L."/>
            <person name="Roberts D."/>
            <person name="Schaefer M."/>
            <person name="Scharfe M."/>
            <person name="Scherens B."/>
            <person name="Schramm S."/>
            <person name="Schroeder M."/>
            <person name="Sdicu A.-M."/>
            <person name="Tettelin H."/>
            <person name="Urrestarazu L.A."/>
            <person name="Ushinsky S."/>
            <person name="Vierendeels F."/>
            <person name="Vissers S."/>
            <person name="Voss H."/>
            <person name="Walsh S.V."/>
            <person name="Wambutt R."/>
            <person name="Wang Y."/>
            <person name="Wedler E."/>
            <person name="Wedler H."/>
            <person name="Winnett E."/>
            <person name="Zhong W.-W."/>
            <person name="Zollner A."/>
            <person name="Vo D.H."/>
            <person name="Hani J."/>
        </authorList>
    </citation>
    <scope>NUCLEOTIDE SEQUENCE [LARGE SCALE GENOMIC DNA]</scope>
    <source>
        <strain>ATCC 204508 / S288c</strain>
    </source>
</reference>
<reference key="2">
    <citation type="journal article" date="2014" name="G3 (Bethesda)">
        <title>The reference genome sequence of Saccharomyces cerevisiae: Then and now.</title>
        <authorList>
            <person name="Engel S.R."/>
            <person name="Dietrich F.S."/>
            <person name="Fisk D.G."/>
            <person name="Binkley G."/>
            <person name="Balakrishnan R."/>
            <person name="Costanzo M.C."/>
            <person name="Dwight S.S."/>
            <person name="Hitz B.C."/>
            <person name="Karra K."/>
            <person name="Nash R.S."/>
            <person name="Weng S."/>
            <person name="Wong E.D."/>
            <person name="Lloyd P."/>
            <person name="Skrzypek M.S."/>
            <person name="Miyasato S.R."/>
            <person name="Simison M."/>
            <person name="Cherry J.M."/>
        </authorList>
    </citation>
    <scope>GENOME REANNOTATION</scope>
    <source>
        <strain>ATCC 204508 / S288c</strain>
    </source>
</reference>
<reference key="3">
    <citation type="journal article" date="2007" name="Genome Res.">
        <title>Approaching a complete repository of sequence-verified protein-encoding clones for Saccharomyces cerevisiae.</title>
        <authorList>
            <person name="Hu Y."/>
            <person name="Rolfs A."/>
            <person name="Bhullar B."/>
            <person name="Murthy T.V.S."/>
            <person name="Zhu C."/>
            <person name="Berger M.F."/>
            <person name="Camargo A.A."/>
            <person name="Kelley F."/>
            <person name="McCarron S."/>
            <person name="Jepson D."/>
            <person name="Richardson A."/>
            <person name="Raphael J."/>
            <person name="Moreira D."/>
            <person name="Taycher E."/>
            <person name="Zuo D."/>
            <person name="Mohr S."/>
            <person name="Kane M.F."/>
            <person name="Williamson J."/>
            <person name="Simpson A.J.G."/>
            <person name="Bulyk M.L."/>
            <person name="Harlow E."/>
            <person name="Marsischky G."/>
            <person name="Kolodner R.D."/>
            <person name="LaBaer J."/>
        </authorList>
    </citation>
    <scope>NUCLEOTIDE SEQUENCE [GENOMIC DNA]</scope>
    <source>
        <strain>ATCC 204508 / S288c</strain>
    </source>
</reference>
<feature type="chain" id="PRO_0000299809" description="Putative uncharacterized protein YPL205C">
    <location>
        <begin position="1"/>
        <end position="114"/>
    </location>
</feature>
<feature type="transmembrane region" description="Helical" evidence="1">
    <location>
        <begin position="7"/>
        <end position="27"/>
    </location>
</feature>
<feature type="region of interest" description="Disordered" evidence="2">
    <location>
        <begin position="90"/>
        <end position="114"/>
    </location>
</feature>
<organism>
    <name type="scientific">Saccharomyces cerevisiae (strain ATCC 204508 / S288c)</name>
    <name type="common">Baker's yeast</name>
    <dbReference type="NCBI Taxonomy" id="559292"/>
    <lineage>
        <taxon>Eukaryota</taxon>
        <taxon>Fungi</taxon>
        <taxon>Dikarya</taxon>
        <taxon>Ascomycota</taxon>
        <taxon>Saccharomycotina</taxon>
        <taxon>Saccharomycetes</taxon>
        <taxon>Saccharomycetales</taxon>
        <taxon>Saccharomycetaceae</taxon>
        <taxon>Saccharomyces</taxon>
    </lineage>
</organism>
<name>YP205_YEAST</name>
<keyword id="KW-0472">Membrane</keyword>
<keyword id="KW-0812">Transmembrane</keyword>
<keyword id="KW-1133">Transmembrane helix</keyword>